<organism>
    <name type="scientific">Rattus norvegicus</name>
    <name type="common">Rat</name>
    <dbReference type="NCBI Taxonomy" id="10116"/>
    <lineage>
        <taxon>Eukaryota</taxon>
        <taxon>Metazoa</taxon>
        <taxon>Chordata</taxon>
        <taxon>Craniata</taxon>
        <taxon>Vertebrata</taxon>
        <taxon>Euteleostomi</taxon>
        <taxon>Mammalia</taxon>
        <taxon>Eutheria</taxon>
        <taxon>Euarchontoglires</taxon>
        <taxon>Glires</taxon>
        <taxon>Rodentia</taxon>
        <taxon>Myomorpha</taxon>
        <taxon>Muroidea</taxon>
        <taxon>Muridae</taxon>
        <taxon>Murinae</taxon>
        <taxon>Rattus</taxon>
    </lineage>
</organism>
<keyword id="KW-0007">Acetylation</keyword>
<keyword id="KW-0152">Cholesterol biosynthesis</keyword>
<keyword id="KW-0153">Cholesterol metabolism</keyword>
<keyword id="KW-0963">Cytoplasm</keyword>
<keyword id="KW-0379">Hydroxylation</keyword>
<keyword id="KW-0414">Isoprene biosynthesis</keyword>
<keyword id="KW-0444">Lipid biosynthesis</keyword>
<keyword id="KW-0443">Lipid metabolism</keyword>
<keyword id="KW-0460">Magnesium</keyword>
<keyword id="KW-0479">Metal-binding</keyword>
<keyword id="KW-1185">Reference proteome</keyword>
<keyword id="KW-0752">Steroid biosynthesis</keyword>
<keyword id="KW-0753">Steroid metabolism</keyword>
<keyword id="KW-0756">Sterol biosynthesis</keyword>
<keyword id="KW-1207">Sterol metabolism</keyword>
<keyword id="KW-0808">Transferase</keyword>
<name>FPPS_RAT</name>
<feature type="chain" id="PRO_0000123946" description="Farnesyl pyrophosphate synthase">
    <location>
        <begin position="1"/>
        <end position="353"/>
    </location>
</feature>
<feature type="binding site" evidence="2">
    <location>
        <position position="57"/>
    </location>
    <ligand>
        <name>isopentenyl diphosphate</name>
        <dbReference type="ChEBI" id="CHEBI:128769"/>
    </ligand>
</feature>
<feature type="binding site" evidence="2">
    <location>
        <position position="60"/>
    </location>
    <ligand>
        <name>isopentenyl diphosphate</name>
        <dbReference type="ChEBI" id="CHEBI:128769"/>
    </ligand>
</feature>
<feature type="binding site" evidence="2">
    <location>
        <position position="96"/>
    </location>
    <ligand>
        <name>isopentenyl diphosphate</name>
        <dbReference type="ChEBI" id="CHEBI:128769"/>
    </ligand>
</feature>
<feature type="binding site" evidence="2">
    <location>
        <position position="103"/>
    </location>
    <ligand>
        <name>Mg(2+)</name>
        <dbReference type="ChEBI" id="CHEBI:18420"/>
        <label>1</label>
    </ligand>
</feature>
<feature type="binding site" evidence="2">
    <location>
        <position position="103"/>
    </location>
    <ligand>
        <name>Mg(2+)</name>
        <dbReference type="ChEBI" id="CHEBI:18420"/>
        <label>2</label>
    </ligand>
</feature>
<feature type="binding site" evidence="2">
    <location>
        <position position="107"/>
    </location>
    <ligand>
        <name>Mg(2+)</name>
        <dbReference type="ChEBI" id="CHEBI:18420"/>
        <label>1</label>
    </ligand>
</feature>
<feature type="binding site" evidence="2">
    <location>
        <position position="107"/>
    </location>
    <ligand>
        <name>Mg(2+)</name>
        <dbReference type="ChEBI" id="CHEBI:18420"/>
        <label>2</label>
    </ligand>
</feature>
<feature type="binding site" evidence="1">
    <location>
        <position position="112"/>
    </location>
    <ligand>
        <name>dimethylallyl diphosphate</name>
        <dbReference type="ChEBI" id="CHEBI:57623"/>
    </ligand>
</feature>
<feature type="binding site" evidence="2">
    <location>
        <position position="113"/>
    </location>
    <ligand>
        <name>isopentenyl diphosphate</name>
        <dbReference type="ChEBI" id="CHEBI:128769"/>
    </ligand>
</feature>
<feature type="binding site" evidence="1">
    <location>
        <position position="200"/>
    </location>
    <ligand>
        <name>dimethylallyl diphosphate</name>
        <dbReference type="ChEBI" id="CHEBI:57623"/>
    </ligand>
</feature>
<feature type="binding site" evidence="1">
    <location>
        <position position="201"/>
    </location>
    <ligand>
        <name>dimethylallyl diphosphate</name>
        <dbReference type="ChEBI" id="CHEBI:57623"/>
    </ligand>
</feature>
<feature type="binding site" evidence="1">
    <location>
        <position position="240"/>
    </location>
    <ligand>
        <name>dimethylallyl diphosphate</name>
        <dbReference type="ChEBI" id="CHEBI:57623"/>
    </ligand>
</feature>
<feature type="binding site" evidence="1">
    <location>
        <position position="257"/>
    </location>
    <ligand>
        <name>dimethylallyl diphosphate</name>
        <dbReference type="ChEBI" id="CHEBI:57623"/>
    </ligand>
</feature>
<feature type="binding site" evidence="1">
    <location>
        <position position="266"/>
    </location>
    <ligand>
        <name>dimethylallyl diphosphate</name>
        <dbReference type="ChEBI" id="CHEBI:57623"/>
    </ligand>
</feature>
<feature type="site" description="Important for determining product chain length" evidence="1">
    <location>
        <position position="98"/>
    </location>
</feature>
<feature type="site" description="Important for determining product chain length" evidence="1">
    <location>
        <position position="99"/>
    </location>
</feature>
<feature type="modified residue" description="N6-(2-hydroxyisobutyryl)lysine; alternate" evidence="2">
    <location>
        <position position="57"/>
    </location>
</feature>
<feature type="modified residue" description="N6-acetyllysine; alternate" evidence="2">
    <location>
        <position position="57"/>
    </location>
</feature>
<feature type="sequence variant" evidence="3">
    <original>Y</original>
    <variation>H</variation>
    <location>
        <position position="110"/>
    </location>
</feature>
<gene>
    <name type="primary">Fdps</name>
</gene>
<proteinExistence type="evidence at transcript level"/>
<sequence length="353" mass="40830">MNGDQKLDVHNQEKQNFIQHFSQIVKVLTEDELGHPEKGDAITRIKEVLEYNTVGGKYNRGLTVVQTFQELVEPRKQDAESLQRALTVGWCVELLQAFFLVLDDIMDSSYTRRGQICWYQKPGIGLDAINDALLLEAAIYRLLKFYCREQPYYLNLLELFLQSSYQTEIGQTLDLITAPQGQVDLGRYTEKRYKSIVKYKTAFYSFYLPIAAAMYMAGIDGEKEHANALKILLEMGEFFQIQDDYLDLFGDPSVTGKVGTDIQDNKCSWLVVQCLLRATPQQRQILEENYGQKDPEKVARVKALYEELDLRSVFFKYEEDSYNRLKSLIEQCSAPLPPSIFLELANKIYKRRK</sequence>
<protein>
    <recommendedName>
        <fullName>Farnesyl pyrophosphate synthase</fullName>
        <shortName>FPP synthase</shortName>
        <shortName>FPS</shortName>
        <ecNumber>2.5.1.10</ecNumber>
    </recommendedName>
    <alternativeName>
        <fullName>(2E,6E)-farnesyl diphosphate synthase</fullName>
    </alternativeName>
    <alternativeName>
        <fullName>Cholesterol-regulated 39 kDa protein</fullName>
        <shortName>CR 39</shortName>
    </alternativeName>
    <alternativeName>
        <fullName>Dimethylallyltranstransferase</fullName>
        <ecNumber>2.5.1.1</ecNumber>
    </alternativeName>
    <alternativeName>
        <fullName>Farnesyl diphosphate synthase</fullName>
    </alternativeName>
    <alternativeName>
        <fullName>Geranyltranstransferase</fullName>
    </alternativeName>
</protein>
<accession>P05369</accession>
<accession>Q6GT82</accession>
<reference key="1">
    <citation type="journal article" date="1987" name="Mol. Cell. Biol.">
        <title>Molecular cloning and sequence of a cholesterol-repressible enzyme related to prenyltransferase in the isoprene biosynthetic pathway.</title>
        <authorList>
            <person name="Clarke C.F."/>
            <person name="Tanaka R.D."/>
            <person name="Svenson K."/>
            <person name="Wamsley M."/>
            <person name="Fogelman A.M."/>
            <person name="Edwards P.A."/>
        </authorList>
    </citation>
    <scope>NUCLEOTIDE SEQUENCE [MRNA]</scope>
    <source>
        <tissue>Liver</tissue>
    </source>
</reference>
<reference key="2">
    <citation type="journal article" date="1990" name="Mol. Cell. Biol.">
        <title>Testis-specific transcription initiation sites of rat farnesyl pyrophosphate synthetase mRNA.</title>
        <authorList>
            <person name="Teruya J.H."/>
            <person name="Kutsunai S.Y."/>
            <person name="Spear D.H."/>
            <person name="Edwards P.A."/>
            <person name="Clarke C.F."/>
        </authorList>
    </citation>
    <scope>NUCLEOTIDE SEQUENCE [MRNA]</scope>
    <scope>SEQUENCE REVISION</scope>
    <source>
        <strain>Sprague-Dawley</strain>
        <tissue>Testis</tissue>
    </source>
</reference>
<reference key="3">
    <citation type="journal article" date="2004" name="Genome Res.">
        <title>The status, quality, and expansion of the NIH full-length cDNA project: the Mammalian Gene Collection (MGC).</title>
        <authorList>
            <consortium name="The MGC Project Team"/>
        </authorList>
    </citation>
    <scope>NUCLEOTIDE SEQUENCE [LARGE SCALE MRNA]</scope>
    <scope>VARIANT HIS-110</scope>
    <source>
        <tissue>Pituitary</tissue>
    </source>
</reference>
<comment type="function">
    <text evidence="1">Key enzyme in isoprenoid biosynthesis which catalyzes the formation of farnesyl diphosphate (FPP), a precursor for several classes of essential metabolites including sterols, dolichols, carotenoids, and ubiquinones. FPP also serves as substrate for protein farnesylation and geranylgeranylation. Catalyzes the sequential condensation of isopentenyl pyrophosphate with the allylic pyrophosphates, dimethylallyl pyrophosphate, and then with the resultant geranylpyrophosphate to the ultimate product farnesyl pyrophosphate (By similarity).</text>
</comment>
<comment type="catalytic activity">
    <reaction>
        <text>isopentenyl diphosphate + dimethylallyl diphosphate = (2E)-geranyl diphosphate + diphosphate</text>
        <dbReference type="Rhea" id="RHEA:22408"/>
        <dbReference type="ChEBI" id="CHEBI:33019"/>
        <dbReference type="ChEBI" id="CHEBI:57623"/>
        <dbReference type="ChEBI" id="CHEBI:58057"/>
        <dbReference type="ChEBI" id="CHEBI:128769"/>
        <dbReference type="EC" id="2.5.1.1"/>
    </reaction>
</comment>
<comment type="catalytic activity">
    <reaction>
        <text>isopentenyl diphosphate + (2E)-geranyl diphosphate = (2E,6E)-farnesyl diphosphate + diphosphate</text>
        <dbReference type="Rhea" id="RHEA:19361"/>
        <dbReference type="ChEBI" id="CHEBI:33019"/>
        <dbReference type="ChEBI" id="CHEBI:58057"/>
        <dbReference type="ChEBI" id="CHEBI:128769"/>
        <dbReference type="ChEBI" id="CHEBI:175763"/>
        <dbReference type="EC" id="2.5.1.10"/>
    </reaction>
</comment>
<comment type="cofactor">
    <cofactor evidence="1">
        <name>Mg(2+)</name>
        <dbReference type="ChEBI" id="CHEBI:18420"/>
    </cofactor>
    <text evidence="1">Binds 2 Mg(2+) ions per subunit.</text>
</comment>
<comment type="activity regulation">
    <text evidence="1">Inactivated by interferon-induced RSAD2. This inactivation may result of disruption of lipid rafts at the plasma membrane, and thus have an antiviral effect since many enveloped viruses need lipid rafts to bud efficiently out of the cell (By similarity).</text>
</comment>
<comment type="pathway">
    <text>Isoprenoid biosynthesis; farnesyl diphosphate biosynthesis; farnesyl diphosphate from geranyl diphosphate and isopentenyl diphosphate: step 1/1.</text>
</comment>
<comment type="pathway">
    <text>Isoprenoid biosynthesis; geranyl diphosphate biosynthesis; geranyl diphosphate from dimethylallyl diphosphate and isopentenyl diphosphate: step 1/1.</text>
</comment>
<comment type="subunit">
    <text evidence="1">Homodimer. Interacts with RSAD2 (By similarity).</text>
</comment>
<comment type="subcellular location">
    <subcellularLocation>
        <location>Cytoplasm</location>
    </subcellularLocation>
</comment>
<comment type="tissue specificity">
    <text>Testis, liver, kidney, brain and adrenal gland.</text>
</comment>
<comment type="similarity">
    <text evidence="4">Belongs to the FPP/GGPP synthase family.</text>
</comment>
<evidence type="ECO:0000250" key="1"/>
<evidence type="ECO:0000250" key="2">
    <source>
        <dbReference type="UniProtKB" id="P14324"/>
    </source>
</evidence>
<evidence type="ECO:0000269" key="3">
    <source>
    </source>
</evidence>
<evidence type="ECO:0000305" key="4"/>
<dbReference type="EC" id="2.5.1.10"/>
<dbReference type="EC" id="2.5.1.1"/>
<dbReference type="EMBL" id="M34477">
    <property type="protein sequence ID" value="AAA41143.1"/>
    <property type="molecule type" value="mRNA"/>
</dbReference>
<dbReference type="EMBL" id="M17300">
    <property type="protein sequence ID" value="AAA40960.1"/>
    <property type="status" value="ALT_SEQ"/>
    <property type="molecule type" value="mRNA"/>
</dbReference>
<dbReference type="EMBL" id="BC059125">
    <property type="protein sequence ID" value="AAH59125.1"/>
    <property type="molecule type" value="mRNA"/>
</dbReference>
<dbReference type="PIR" id="A34713">
    <property type="entry name" value="A34713"/>
</dbReference>
<dbReference type="PIR" id="B34713">
    <property type="entry name" value="B34713"/>
</dbReference>
<dbReference type="RefSeq" id="NP_114028.1">
    <property type="nucleotide sequence ID" value="NM_031840.1"/>
</dbReference>
<dbReference type="SMR" id="P05369"/>
<dbReference type="BioGRID" id="249834">
    <property type="interactions" value="1"/>
</dbReference>
<dbReference type="FunCoup" id="P05369">
    <property type="interactions" value="2184"/>
</dbReference>
<dbReference type="IntAct" id="P05369">
    <property type="interactions" value="1"/>
</dbReference>
<dbReference type="STRING" id="10116.ENSRNOP00000031191"/>
<dbReference type="BindingDB" id="P05369"/>
<dbReference type="ChEMBL" id="CHEMBL1075093"/>
<dbReference type="DrugCentral" id="P05369"/>
<dbReference type="GuidetoPHARMACOLOGY" id="644"/>
<dbReference type="iPTMnet" id="P05369"/>
<dbReference type="PhosphoSitePlus" id="P05369"/>
<dbReference type="jPOST" id="P05369"/>
<dbReference type="GeneID" id="83791"/>
<dbReference type="KEGG" id="rno:83791"/>
<dbReference type="UCSC" id="RGD:68953">
    <property type="organism name" value="rat"/>
</dbReference>
<dbReference type="AGR" id="RGD:68953"/>
<dbReference type="CTD" id="2224"/>
<dbReference type="RGD" id="68953">
    <property type="gene designation" value="Fdps"/>
</dbReference>
<dbReference type="InParanoid" id="P05369"/>
<dbReference type="OrthoDB" id="50615at9989"/>
<dbReference type="PhylomeDB" id="P05369"/>
<dbReference type="Reactome" id="R-RNO-191273">
    <property type="pathway name" value="Cholesterol biosynthesis"/>
</dbReference>
<dbReference type="SABIO-RK" id="P05369"/>
<dbReference type="UniPathway" id="UPA00259">
    <property type="reaction ID" value="UER00368"/>
</dbReference>
<dbReference type="UniPathway" id="UPA00260">
    <property type="reaction ID" value="UER00369"/>
</dbReference>
<dbReference type="PRO" id="PR:P05369"/>
<dbReference type="Proteomes" id="UP000002494">
    <property type="component" value="Unplaced"/>
</dbReference>
<dbReference type="GO" id="GO:0005737">
    <property type="term" value="C:cytoplasm"/>
    <property type="evidence" value="ECO:0000318"/>
    <property type="project" value="GO_Central"/>
</dbReference>
<dbReference type="GO" id="GO:0005759">
    <property type="term" value="C:mitochondrial matrix"/>
    <property type="evidence" value="ECO:0000314"/>
    <property type="project" value="RGD"/>
</dbReference>
<dbReference type="GO" id="GO:0005777">
    <property type="term" value="C:peroxisome"/>
    <property type="evidence" value="ECO:0000314"/>
    <property type="project" value="UniProtKB"/>
</dbReference>
<dbReference type="GO" id="GO:0004337">
    <property type="term" value="F:(2E,6E)-farnesyl diphosphate synthase activity"/>
    <property type="evidence" value="ECO:0000314"/>
    <property type="project" value="RGD"/>
</dbReference>
<dbReference type="GO" id="GO:0004161">
    <property type="term" value="F:dimethylallyltranstransferase activity"/>
    <property type="evidence" value="ECO:0000318"/>
    <property type="project" value="GO_Central"/>
</dbReference>
<dbReference type="GO" id="GO:0046872">
    <property type="term" value="F:metal ion binding"/>
    <property type="evidence" value="ECO:0007669"/>
    <property type="project" value="UniProtKB-KW"/>
</dbReference>
<dbReference type="GO" id="GO:0071398">
    <property type="term" value="P:cellular response to fatty acid"/>
    <property type="evidence" value="ECO:0000270"/>
    <property type="project" value="RGD"/>
</dbReference>
<dbReference type="GO" id="GO:0006695">
    <property type="term" value="P:cholesterol biosynthetic process"/>
    <property type="evidence" value="ECO:0000304"/>
    <property type="project" value="RGD"/>
</dbReference>
<dbReference type="GO" id="GO:0045337">
    <property type="term" value="P:farnesyl diphosphate biosynthetic process"/>
    <property type="evidence" value="ECO:0000314"/>
    <property type="project" value="RGD"/>
</dbReference>
<dbReference type="GO" id="GO:0033384">
    <property type="term" value="P:geranyl diphosphate biosynthetic process"/>
    <property type="evidence" value="ECO:0007669"/>
    <property type="project" value="UniProtKB-UniPathway"/>
</dbReference>
<dbReference type="GO" id="GO:0008584">
    <property type="term" value="P:male gonad development"/>
    <property type="evidence" value="ECO:0000270"/>
    <property type="project" value="RGD"/>
</dbReference>
<dbReference type="GO" id="GO:0061051">
    <property type="term" value="P:positive regulation of cell growth involved in cardiac muscle cell development"/>
    <property type="evidence" value="ECO:0000315"/>
    <property type="project" value="RGD"/>
</dbReference>
<dbReference type="GO" id="GO:0045542">
    <property type="term" value="P:positive regulation of cholesterol biosynthetic process"/>
    <property type="evidence" value="ECO:0000315"/>
    <property type="project" value="RGD"/>
</dbReference>
<dbReference type="GO" id="GO:0070723">
    <property type="term" value="P:response to cholesterol"/>
    <property type="evidence" value="ECO:0000270"/>
    <property type="project" value="RGD"/>
</dbReference>
<dbReference type="GO" id="GO:0043434">
    <property type="term" value="P:response to peptide hormone"/>
    <property type="evidence" value="ECO:0000270"/>
    <property type="project" value="RGD"/>
</dbReference>
<dbReference type="GO" id="GO:0033574">
    <property type="term" value="P:response to testosterone"/>
    <property type="evidence" value="ECO:0000270"/>
    <property type="project" value="RGD"/>
</dbReference>
<dbReference type="GO" id="GO:0009410">
    <property type="term" value="P:response to xenobiotic stimulus"/>
    <property type="evidence" value="ECO:0000270"/>
    <property type="project" value="RGD"/>
</dbReference>
<dbReference type="GO" id="GO:0007283">
    <property type="term" value="P:spermatogenesis"/>
    <property type="evidence" value="ECO:0000270"/>
    <property type="project" value="RGD"/>
</dbReference>
<dbReference type="CDD" id="cd00685">
    <property type="entry name" value="Trans_IPPS_HT"/>
    <property type="match status" value="1"/>
</dbReference>
<dbReference type="FunFam" id="1.10.600.10:FF:000052">
    <property type="entry name" value="Farnesyl pyrophosphate synthase"/>
    <property type="match status" value="1"/>
</dbReference>
<dbReference type="Gene3D" id="1.10.600.10">
    <property type="entry name" value="Farnesyl Diphosphate Synthase"/>
    <property type="match status" value="1"/>
</dbReference>
<dbReference type="InterPro" id="IPR039702">
    <property type="entry name" value="FPS1-like"/>
</dbReference>
<dbReference type="InterPro" id="IPR008949">
    <property type="entry name" value="Isoprenoid_synthase_dom_sf"/>
</dbReference>
<dbReference type="InterPro" id="IPR000092">
    <property type="entry name" value="Polyprenyl_synt"/>
</dbReference>
<dbReference type="InterPro" id="IPR033749">
    <property type="entry name" value="Polyprenyl_synt_CS"/>
</dbReference>
<dbReference type="PANTHER" id="PTHR11525:SF0">
    <property type="entry name" value="FARNESYL PYROPHOSPHATE SYNTHASE"/>
    <property type="match status" value="1"/>
</dbReference>
<dbReference type="PANTHER" id="PTHR11525">
    <property type="entry name" value="FARNESYL-PYROPHOSPHATE SYNTHETASE"/>
    <property type="match status" value="1"/>
</dbReference>
<dbReference type="Pfam" id="PF00348">
    <property type="entry name" value="polyprenyl_synt"/>
    <property type="match status" value="1"/>
</dbReference>
<dbReference type="SFLD" id="SFLDS00005">
    <property type="entry name" value="Isoprenoid_Synthase_Type_I"/>
    <property type="match status" value="1"/>
</dbReference>
<dbReference type="SFLD" id="SFLDG01017">
    <property type="entry name" value="Polyprenyl_Transferase_Like"/>
    <property type="match status" value="1"/>
</dbReference>
<dbReference type="SUPFAM" id="SSF48576">
    <property type="entry name" value="Terpenoid synthases"/>
    <property type="match status" value="1"/>
</dbReference>
<dbReference type="PROSITE" id="PS00723">
    <property type="entry name" value="POLYPRENYL_SYNTHASE_1"/>
    <property type="match status" value="1"/>
</dbReference>
<dbReference type="PROSITE" id="PS00444">
    <property type="entry name" value="POLYPRENYL_SYNTHASE_2"/>
    <property type="match status" value="1"/>
</dbReference>